<sequence>MATEISTRGRQRAIGHEEYSLYSSLSEEELLQMAIEQSLADKTRGPTPAEASASSQTNHQPGHFHPWTRSPSSPENPPARAPLGLFQGVMQKYSSNLFKTSQMAAMDPVLKAIKEGDEEALKIMIQDGKNLAEPNKEGWLPLHEAAYYGQLGCLKVLQQAYPGTIDQRTLQEETALYLATCREHLDCLLSLLQAGAEPDISNKSRETPLYKACERKNAEAVRILVRYNADANHRCNRGWTALHESVSRNDLEVMEILVSGGAKVEAKNVYSITPLFVAAQSGQLEALRFLAKHGADINTQASDSASALYEASKNEHEDVVEFLLSQGADANKANKDGLLPLHVASKKGNYRIVQMLLPVTSRTRVRRSGISPLHLAAERNHDAVLEALLAARFDVNAPLAPERARLYEDRRSSALYFAVVNNNVYATELLLLAGADPNRDVISPLLVAIRHGCLRTMQLLLDHGANIDAYIATHPTAFPATIMFAMKCLSLLKFLMDLGCDGEPCFSCLYGNGPHPPAPRPGRFHDAPVDDKAPSVVQFCEFLSAPEVSRWAGPIIDVLLDYVGNVQLCSRLKEHIDSFEDWAVIKEKAEPPRPLAHLCRLRVRKAIGKYRIKLLDTLPLPGRLIRYLKYENTQ</sequence>
<keyword id="KW-0025">Alternative splicing</keyword>
<keyword id="KW-0040">ANK repeat</keyword>
<keyword id="KW-0963">Cytoplasm</keyword>
<keyword id="KW-0206">Cytoskeleton</keyword>
<keyword id="KW-0597">Phosphoprotein</keyword>
<keyword id="KW-1185">Reference proteome</keyword>
<keyword id="KW-0677">Repeat</keyword>
<keyword id="KW-0832">Ubl conjugation</keyword>
<keyword id="KW-0833">Ubl conjugation pathway</keyword>
<name>ASB2_MOUSE</name>
<dbReference type="EMBL" id="AF155353">
    <property type="protein sequence ID" value="AAD38809.2"/>
    <property type="status" value="ALT_INIT"/>
    <property type="molecule type" value="mRNA"/>
</dbReference>
<dbReference type="EMBL" id="BC031161">
    <property type="protein sequence ID" value="AAH31161.1"/>
    <property type="molecule type" value="mRNA"/>
</dbReference>
<dbReference type="EMBL" id="AK003566">
    <property type="protein sequence ID" value="BAB22862.1"/>
    <property type="molecule type" value="mRNA"/>
</dbReference>
<dbReference type="CCDS" id="CCDS26128.1">
    <molecule id="Q8K0L0-1"/>
</dbReference>
<dbReference type="CCDS" id="CCDS88394.1">
    <molecule id="Q8K0L0-2"/>
</dbReference>
<dbReference type="RefSeq" id="NP_001361693.1">
    <molecule id="Q8K0L0-2"/>
    <property type="nucleotide sequence ID" value="NM_001374764.1"/>
</dbReference>
<dbReference type="RefSeq" id="NP_075536.1">
    <molecule id="Q8K0L0-1"/>
    <property type="nucleotide sequence ID" value="NM_023049.1"/>
</dbReference>
<dbReference type="SMR" id="Q8K0L0"/>
<dbReference type="BioGRID" id="211145">
    <property type="interactions" value="2"/>
</dbReference>
<dbReference type="FunCoup" id="Q8K0L0">
    <property type="interactions" value="33"/>
</dbReference>
<dbReference type="IntAct" id="Q8K0L0">
    <property type="interactions" value="1"/>
</dbReference>
<dbReference type="STRING" id="10090.ENSMUSP00000021617"/>
<dbReference type="GlyGen" id="Q8K0L0">
    <property type="glycosylation" value="1 site"/>
</dbReference>
<dbReference type="iPTMnet" id="Q8K0L0"/>
<dbReference type="PhosphoSitePlus" id="Q8K0L0"/>
<dbReference type="PaxDb" id="10090-ENSMUSP00000021617"/>
<dbReference type="ProteomicsDB" id="281915">
    <molecule id="Q8K0L0-1"/>
</dbReference>
<dbReference type="ProteomicsDB" id="281916">
    <molecule id="Q8K0L0-2"/>
</dbReference>
<dbReference type="Antibodypedia" id="16">
    <property type="antibodies" value="192 antibodies from 27 providers"/>
</dbReference>
<dbReference type="DNASU" id="65256"/>
<dbReference type="Ensembl" id="ENSMUST00000021617.14">
    <molecule id="Q8K0L0-1"/>
    <property type="protein sequence ID" value="ENSMUSP00000021617.8"/>
    <property type="gene ID" value="ENSMUSG00000021200.15"/>
</dbReference>
<dbReference type="Ensembl" id="ENSMUST00000149431.2">
    <molecule id="Q8K0L0-2"/>
    <property type="protein sequence ID" value="ENSMUSP00000117595.2"/>
    <property type="gene ID" value="ENSMUSG00000021200.15"/>
</dbReference>
<dbReference type="GeneID" id="65256"/>
<dbReference type="UCSC" id="uc007ovc.1">
    <molecule id="Q8K0L0-1"/>
    <property type="organism name" value="mouse"/>
</dbReference>
<dbReference type="UCSC" id="uc007ovd.1">
    <molecule id="Q8K0L0-2"/>
    <property type="organism name" value="mouse"/>
</dbReference>
<dbReference type="AGR" id="MGI:1929743"/>
<dbReference type="CTD" id="51676"/>
<dbReference type="MGI" id="MGI:1929743">
    <property type="gene designation" value="Asb2"/>
</dbReference>
<dbReference type="VEuPathDB" id="HostDB:ENSMUSG00000021200"/>
<dbReference type="eggNOG" id="KOG0504">
    <property type="taxonomic scope" value="Eukaryota"/>
</dbReference>
<dbReference type="GeneTree" id="ENSGT00940000155490"/>
<dbReference type="HOGENOM" id="CLU_023739_2_0_1"/>
<dbReference type="InParanoid" id="Q8K0L0"/>
<dbReference type="OMA" id="WTCIKEK"/>
<dbReference type="OrthoDB" id="539213at2759"/>
<dbReference type="PhylomeDB" id="Q8K0L0"/>
<dbReference type="TreeFam" id="TF315127"/>
<dbReference type="UniPathway" id="UPA00143"/>
<dbReference type="BioGRID-ORCS" id="65256">
    <property type="hits" value="0 hits in 78 CRISPR screens"/>
</dbReference>
<dbReference type="PRO" id="PR:Q8K0L0"/>
<dbReference type="Proteomes" id="UP000000589">
    <property type="component" value="Chromosome 12"/>
</dbReference>
<dbReference type="RNAct" id="Q8K0L0">
    <property type="molecule type" value="protein"/>
</dbReference>
<dbReference type="Bgee" id="ENSMUSG00000021200">
    <property type="expression patterns" value="Expressed in knee joint and 126 other cell types or tissues"/>
</dbReference>
<dbReference type="GO" id="GO:0031466">
    <property type="term" value="C:Cul5-RING ubiquitin ligase complex"/>
    <property type="evidence" value="ECO:0000314"/>
    <property type="project" value="MGI"/>
</dbReference>
<dbReference type="GO" id="GO:0001725">
    <property type="term" value="C:stress fiber"/>
    <property type="evidence" value="ECO:0007669"/>
    <property type="project" value="UniProtKB-SubCell"/>
</dbReference>
<dbReference type="GO" id="GO:0000151">
    <property type="term" value="C:ubiquitin ligase complex"/>
    <property type="evidence" value="ECO:0000250"/>
    <property type="project" value="UniProtKB"/>
</dbReference>
<dbReference type="GO" id="GO:0030018">
    <property type="term" value="C:Z disc"/>
    <property type="evidence" value="ECO:0000314"/>
    <property type="project" value="UniProtKB"/>
</dbReference>
<dbReference type="GO" id="GO:0097602">
    <property type="term" value="F:cullin family protein binding"/>
    <property type="evidence" value="ECO:0000250"/>
    <property type="project" value="UniProtKB"/>
</dbReference>
<dbReference type="GO" id="GO:0061630">
    <property type="term" value="F:ubiquitin protein ligase activity"/>
    <property type="evidence" value="ECO:0007669"/>
    <property type="project" value="Ensembl"/>
</dbReference>
<dbReference type="GO" id="GO:0030036">
    <property type="term" value="P:actin cytoskeleton organization"/>
    <property type="evidence" value="ECO:0000315"/>
    <property type="project" value="UniProtKB"/>
</dbReference>
<dbReference type="GO" id="GO:0055013">
    <property type="term" value="P:cardiac muscle cell development"/>
    <property type="evidence" value="ECO:0000315"/>
    <property type="project" value="UniProtKB"/>
</dbReference>
<dbReference type="GO" id="GO:0055007">
    <property type="term" value="P:cardiac muscle cell differentiation"/>
    <property type="evidence" value="ECO:0000250"/>
    <property type="project" value="UniProtKB"/>
</dbReference>
<dbReference type="GO" id="GO:0036336">
    <property type="term" value="P:dendritic cell migration"/>
    <property type="evidence" value="ECO:0000314"/>
    <property type="project" value="UniProtKB"/>
</dbReference>
<dbReference type="GO" id="GO:0001947">
    <property type="term" value="P:heart looping"/>
    <property type="evidence" value="ECO:0000315"/>
    <property type="project" value="UniProtKB"/>
</dbReference>
<dbReference type="GO" id="GO:0035556">
    <property type="term" value="P:intracellular signal transduction"/>
    <property type="evidence" value="ECO:0007669"/>
    <property type="project" value="InterPro"/>
</dbReference>
<dbReference type="GO" id="GO:0045445">
    <property type="term" value="P:myoblast differentiation"/>
    <property type="evidence" value="ECO:0000315"/>
    <property type="project" value="MGI"/>
</dbReference>
<dbReference type="GO" id="GO:0071800">
    <property type="term" value="P:podosome assembly"/>
    <property type="evidence" value="ECO:0000315"/>
    <property type="project" value="UniProtKB"/>
</dbReference>
<dbReference type="GO" id="GO:0043161">
    <property type="term" value="P:proteasome-mediated ubiquitin-dependent protein catabolic process"/>
    <property type="evidence" value="ECO:0000315"/>
    <property type="project" value="UniProtKB"/>
</dbReference>
<dbReference type="GO" id="GO:0000209">
    <property type="term" value="P:protein polyubiquitination"/>
    <property type="evidence" value="ECO:0000314"/>
    <property type="project" value="MGI"/>
</dbReference>
<dbReference type="GO" id="GO:0016567">
    <property type="term" value="P:protein ubiquitination"/>
    <property type="evidence" value="ECO:0007669"/>
    <property type="project" value="UniProtKB-UniPathway"/>
</dbReference>
<dbReference type="GO" id="GO:0014732">
    <property type="term" value="P:skeletal muscle atrophy"/>
    <property type="evidence" value="ECO:0000315"/>
    <property type="project" value="UniProtKB"/>
</dbReference>
<dbReference type="GO" id="GO:0035914">
    <property type="term" value="P:skeletal muscle cell differentiation"/>
    <property type="evidence" value="ECO:0000315"/>
    <property type="project" value="MGI"/>
</dbReference>
<dbReference type="GO" id="GO:0006511">
    <property type="term" value="P:ubiquitin-dependent protein catabolic process"/>
    <property type="evidence" value="ECO:0000314"/>
    <property type="project" value="MGI"/>
</dbReference>
<dbReference type="FunFam" id="1.10.750.20:FF:000001">
    <property type="entry name" value="Ankyrin repeat and SOCS box containing 1"/>
    <property type="match status" value="1"/>
</dbReference>
<dbReference type="FunFam" id="1.25.40.20:FF:000246">
    <property type="entry name" value="Ankyrin repeat and SOCS box containing 2"/>
    <property type="match status" value="1"/>
</dbReference>
<dbReference type="FunFam" id="1.25.40.20:FF:000254">
    <property type="entry name" value="Ankyrin repeat and SOCS box containing 2"/>
    <property type="match status" value="1"/>
</dbReference>
<dbReference type="FunFam" id="1.25.40.20:FF:000905">
    <property type="entry name" value="Ankyrin repeat and SOCS box protein 2"/>
    <property type="match status" value="1"/>
</dbReference>
<dbReference type="Gene3D" id="1.25.40.20">
    <property type="entry name" value="Ankyrin repeat-containing domain"/>
    <property type="match status" value="3"/>
</dbReference>
<dbReference type="Gene3D" id="1.10.750.20">
    <property type="entry name" value="SOCS box"/>
    <property type="match status" value="1"/>
</dbReference>
<dbReference type="InterPro" id="IPR002110">
    <property type="entry name" value="Ankyrin_rpt"/>
</dbReference>
<dbReference type="InterPro" id="IPR036770">
    <property type="entry name" value="Ankyrin_rpt-contain_sf"/>
</dbReference>
<dbReference type="InterPro" id="IPR001496">
    <property type="entry name" value="SOCS_box"/>
</dbReference>
<dbReference type="InterPro" id="IPR036036">
    <property type="entry name" value="SOCS_box-like_dom_sf"/>
</dbReference>
<dbReference type="InterPro" id="IPR003903">
    <property type="entry name" value="UIM_dom"/>
</dbReference>
<dbReference type="PANTHER" id="PTHR24173">
    <property type="entry name" value="ANKYRIN REPEAT CONTAINING"/>
    <property type="match status" value="1"/>
</dbReference>
<dbReference type="PANTHER" id="PTHR24173:SF74">
    <property type="entry name" value="ANKYRIN REPEAT DOMAIN-CONTAINING PROTEIN 16"/>
    <property type="match status" value="1"/>
</dbReference>
<dbReference type="Pfam" id="PF00023">
    <property type="entry name" value="Ank"/>
    <property type="match status" value="1"/>
</dbReference>
<dbReference type="Pfam" id="PF12796">
    <property type="entry name" value="Ank_2"/>
    <property type="match status" value="2"/>
</dbReference>
<dbReference type="Pfam" id="PF13606">
    <property type="entry name" value="Ank_3"/>
    <property type="match status" value="1"/>
</dbReference>
<dbReference type="Pfam" id="PF13637">
    <property type="entry name" value="Ank_4"/>
    <property type="match status" value="1"/>
</dbReference>
<dbReference type="Pfam" id="PF07525">
    <property type="entry name" value="SOCS_box"/>
    <property type="match status" value="1"/>
</dbReference>
<dbReference type="PRINTS" id="PR01415">
    <property type="entry name" value="ANKYRIN"/>
</dbReference>
<dbReference type="SMART" id="SM00248">
    <property type="entry name" value="ANK"/>
    <property type="match status" value="11"/>
</dbReference>
<dbReference type="SMART" id="SM00253">
    <property type="entry name" value="SOCS"/>
    <property type="match status" value="1"/>
</dbReference>
<dbReference type="SMART" id="SM00969">
    <property type="entry name" value="SOCS_box"/>
    <property type="match status" value="1"/>
</dbReference>
<dbReference type="SUPFAM" id="SSF48403">
    <property type="entry name" value="Ankyrin repeat"/>
    <property type="match status" value="2"/>
</dbReference>
<dbReference type="SUPFAM" id="SSF158235">
    <property type="entry name" value="SOCS box-like"/>
    <property type="match status" value="1"/>
</dbReference>
<dbReference type="PROSITE" id="PS50297">
    <property type="entry name" value="ANK_REP_REGION"/>
    <property type="match status" value="1"/>
</dbReference>
<dbReference type="PROSITE" id="PS50088">
    <property type="entry name" value="ANK_REPEAT"/>
    <property type="match status" value="8"/>
</dbReference>
<dbReference type="PROSITE" id="PS50225">
    <property type="entry name" value="SOCS"/>
    <property type="match status" value="1"/>
</dbReference>
<dbReference type="PROSITE" id="PS50330">
    <property type="entry name" value="UIM"/>
    <property type="match status" value="1"/>
</dbReference>
<accession>Q8K0L0</accession>
<accession>Q9CTH4</accession>
<accession>Q9WV73</accession>
<comment type="function">
    <text evidence="1 15 16">Substrate-recognition component of a SCF-like ECS (Elongin-Cullin-SOCS-box protein) E3 ubiquitin-protein ligase complex which mediates the ubiquitination and subsequent proteasomal degradation of target proteins (By similarity). Mediates Notch-induced ubiquitination and degradation of substrates including TCF3/E2A and JAK2 (By similarity). Required during embryonic heart development for complete heart looping (PubMed:32179481). Required for cardiomyocyte differentiation (By similarity). Specifically promotes the ubiquitination of SMAD9 and targets it for proteasomal degradation, leading to avoid excessive accumulation of SMAD9 (By similarity). Plays a role in the regulation of NK-cell migration by modulating protein levels of filamin A/FLNA via regulation of its ubiquitination and proteasome degradation (PubMed:33717133).</text>
</comment>
<comment type="function">
    <molecule>Isoform 1</molecule>
    <text evidence="11 12">Involved in myogenic differentiation and targets filamin FLNB for proteasomal degradation but not filamin FLNA (PubMed:26343497). Also targets DES for proteasomal degradation (PubMed:26343497). Acts as a negative regulator of skeletal muscle mass (PubMed:27182554).</text>
</comment>
<comment type="function">
    <molecule>Isoform 2</molecule>
    <text evidence="1 10 13">Targets filamins FLNA and FLNB for proteasomal degradation (PubMed:23632887). This leads to enhanced adhesion of hematopoietic cells to fibronectin (By similarity). Required for FLNA degradation in immature cardiomyocytes which is necessary for actin cytoskeleton remodeling, leading to proper organization of myofibrils and function of mature cardiomyocytes (PubMed:29374072). Required for degradation of FLNA and FLNB in immature dendritic cells (DC) which enhances immature DC migration by promoting DC podosome formation and DC-mediated degradation of the extracellular matrix (PubMed:23632887). Does not promote proteasomal degradation of tyrosine-protein kinases JAK1 or JAK2 in hematopoietic cells (By similarity).</text>
</comment>
<comment type="pathway">
    <text>Protein modification; protein ubiquitination.</text>
</comment>
<comment type="subunit">
    <text evidence="1">Component of a probable ECS E3 ubiquitin-protein ligase complex which contains CUL5, either RBX1 or RNF7/RBX2, Elongin BC complex (ELOB and ELOC) and ASB2. Interacts with SKP2. Through its interaction with SKP2, likely to bridge the formation of dimeric E3-ubiquitin-protein ligase complexes composed of an ECS complex and an SCF(SKP2) complex. Interacts with JAK2; the interaction targets JAK2 for Notch-mediated proteasomal degradation. Interacts with TCF3/E2A; the interaction is mediated by SKP2 and targets TCF3 for Notch-mediated proteasomal degradation.</text>
</comment>
<comment type="subunit">
    <molecule>Isoform 1</molecule>
    <text evidence="11">Interacts with DES.</text>
</comment>
<comment type="subcellular location">
    <subcellularLocation>
        <location evidence="1">Cytoplasm</location>
        <location evidence="1">Cytoskeleton</location>
        <location evidence="1">Stress fiber</location>
    </subcellularLocation>
</comment>
<comment type="subcellular location">
    <molecule>Isoform 1</molecule>
    <subcellularLocation>
        <location evidence="11">Cytoplasm</location>
        <location evidence="11">Myofibril</location>
        <location evidence="11">Sarcomere</location>
        <location evidence="11">Z line</location>
    </subcellularLocation>
    <text evidence="11">Localizes to the Z line in cardiomyocytes.</text>
</comment>
<comment type="alternative products">
    <event type="alternative splicing"/>
    <isoform>
        <id>Q8K0L0-1</id>
        <name evidence="7">1</name>
        <name evidence="19">ASB2beta</name>
        <sequence type="displayed"/>
    </isoform>
    <isoform>
        <id>Q8K0L0-2</id>
        <name evidence="6">2</name>
        <name evidence="19">ASB2alpha</name>
        <sequence type="described" ref="VSP_052025 VSP_052026"/>
    </isoform>
</comment>
<comment type="tissue specificity">
    <text evidence="6 15">Highest expression in muscle, heart and spleen (PubMed:11111040). Highly expressed in cells of the first and second heart fields in the developing embryonic heart (PubMed:32179481). At 9.5 dpc, robust expression predominantly in the left and right ventricles (RV) and to a lower extent in inflow and outflow tracts (PubMed:32179481). At 10.5 and 11.5 dpc, expression is restricted to the myocardium with no expression observed in the endocardium (PubMed:32179481).</text>
</comment>
<comment type="tissue specificity">
    <molecule>Isoform 1</molecule>
    <text evidence="10 13">Not expressed in immature dendritic cells (PubMed:23632887). Highly expressed in adult skeletal muscle with very low levels in adult bone marrow (PubMed:29374072).</text>
</comment>
<comment type="tissue specificity">
    <molecule>Isoform 2</molecule>
    <text evidence="10 13 14">Expressed in immature dendritic cells and in primary dendritic cells derived from the spleen (PubMed:23632887). Highly expressed in adult bone marrow with negligible levels in adult skeletal muscle (PubMed:29374072). Expressed at higher levels in T helper type 2 (Th2) cells than in regulatory T (Treg) cells, type 1 helper T (Th1) cells and T helper 17 (Th17) cells (PubMed:31175139).</text>
</comment>
<comment type="developmental stage">
    <molecule>Isoform 1</molecule>
    <text evidence="13 15">Very low levels found in the developing heart at 9.5 dpc when isoform 2 is the predominant isoform (PubMed:29374072, PubMed:32179481). Expression increases from 11.5 dpc and is the predominant isoform in adult heart (PubMed:29374072, PubMed:32179481).</text>
</comment>
<comment type="developmental stage">
    <molecule>Isoform 2</molecule>
    <text evidence="10 13">Barely detectable in bone marrow cells but levels progressively increase as cells differentiate into immature dendritic cells and are down-regulated after dendritic cell maturation (PubMed:23632887). Highly expressed in the developing heart at 9.5 dpc when isoform 1 levels are very low (PubMed:29374072). Levels increase up to 11.5 dpc and fall in the adult heart (PubMed:29374072).</text>
</comment>
<comment type="induction">
    <text evidence="12 16">Repressed by FST in 6-month-old mice but no effect is seen in 24-month-old mice (PubMed:27182554). Expression is increased 4-fold 3 days after denervation, becomes suppressed by approximately 75% 7 days after denervation, and eventually resolves to baseline by 28 days after denervation (PubMed:27182554). Induced transcriptionally by AHR (PubMed:33717133).</text>
</comment>
<comment type="domain">
    <text evidence="1">The SOCS box domain mediates the interaction with the Elongin BC complex, an adapter module in different E3 ubiquitin-protein ligase complexes.</text>
</comment>
<comment type="domain">
    <molecule>Isoform 2</molecule>
    <text evidence="1">Both the N-terminus and ANK repeats 1 to 10 are necessary for interaction with filamins.</text>
</comment>
<comment type="domain">
    <molecule>Isoform 1</molecule>
    <text evidence="1">The UIM domain is required for monoubiquitination.</text>
</comment>
<comment type="PTM">
    <molecule>Isoform 1</molecule>
    <text evidence="1">Monoubiquitinated.</text>
</comment>
<comment type="PTM">
    <molecule>Isoform 2</molecule>
    <text evidence="1">Not monoubiquitinated.</text>
</comment>
<comment type="PTM">
    <molecule>Isoform 2</molecule>
    <text evidence="1">Phosphorylation at Ser-371 is required for association with FLNA and subsequent FLNA degradation.</text>
</comment>
<comment type="disruption phenotype">
    <text evidence="13 15 17">Embryonic lethality with death occurring in utero around 9.5 dpc (PubMed:29374072). Mice have placental defects, that subsequently result in failure to form a normal cardiac septum, leading to embryo mortality in utero (PubMed:33993984). Embryos display defects in vascular development and hematopoiesis and increased protein levels of Flna in the heart (PubMed:29374072). Conditional knockout in the whole heart and in the first heart field results in pericardial edema and embryonic lethality (PubMed:32179481). Conditional knockout in the embryonic heart results in impaired heart looping, abnormal expression of Flna expression which is expanded to include the myocardial layer and increased expression of Smad2 (PubMed:32179481).</text>
</comment>
<comment type="disruption phenotype">
    <molecule>Isoform 2</molecule>
    <text evidence="10 14">Conditional knockout in hematopoietic stem and progenitor cells results in increased protein levels of Flna and Flnb in immature dendritic cells (PubMed:23632887). Conditional knockout in hematopoietic cells reduces tumor development in a mouse model of colitis-associated tumorigenesis with reduced numbers of T helper type 2 (Th2) cells and regulatory T (Treg) cells and increased numbers of type 1 helper T (Th1) cells and T helper 17 (Th17) cells in the colonic mucosa of tumor-bearing mice (PubMed:31175139).</text>
</comment>
<comment type="similarity">
    <text evidence="20">Belongs to the ankyrin SOCS box (ASB) family.</text>
</comment>
<comment type="sequence caution" evidence="20">
    <conflict type="erroneous initiation">
        <sequence resource="EMBL-CDS" id="AAD38809"/>
    </conflict>
    <text>Truncated N-terminus.</text>
</comment>
<evidence type="ECO:0000250" key="1">
    <source>
        <dbReference type="UniProtKB" id="Q96Q27"/>
    </source>
</evidence>
<evidence type="ECO:0000255" key="2"/>
<evidence type="ECO:0000255" key="3">
    <source>
        <dbReference type="PROSITE-ProRule" id="PRU00194"/>
    </source>
</evidence>
<evidence type="ECO:0000255" key="4">
    <source>
        <dbReference type="PROSITE-ProRule" id="PRU00213"/>
    </source>
</evidence>
<evidence type="ECO:0000256" key="5">
    <source>
        <dbReference type="SAM" id="MobiDB-lite"/>
    </source>
</evidence>
<evidence type="ECO:0000269" key="6">
    <source>
    </source>
</evidence>
<evidence type="ECO:0000269" key="7">
    <source>
    </source>
</evidence>
<evidence type="ECO:0000269" key="8">
    <source>
    </source>
</evidence>
<evidence type="ECO:0000269" key="9">
    <source>
    </source>
</evidence>
<evidence type="ECO:0000269" key="10">
    <source>
    </source>
</evidence>
<evidence type="ECO:0000269" key="11">
    <source>
    </source>
</evidence>
<evidence type="ECO:0000269" key="12">
    <source>
    </source>
</evidence>
<evidence type="ECO:0000269" key="13">
    <source>
    </source>
</evidence>
<evidence type="ECO:0000269" key="14">
    <source>
    </source>
</evidence>
<evidence type="ECO:0000269" key="15">
    <source>
    </source>
</evidence>
<evidence type="ECO:0000269" key="16">
    <source>
    </source>
</evidence>
<evidence type="ECO:0000269" key="17">
    <source>
    </source>
</evidence>
<evidence type="ECO:0000303" key="18">
    <source>
    </source>
</evidence>
<evidence type="ECO:0000303" key="19">
    <source>
    </source>
</evidence>
<evidence type="ECO:0000305" key="20"/>
<evidence type="ECO:0000312" key="21">
    <source>
        <dbReference type="EMBL" id="AAD38809.2"/>
    </source>
</evidence>
<evidence type="ECO:0000312" key="22">
    <source>
        <dbReference type="EMBL" id="AAH31161.1"/>
    </source>
</evidence>
<evidence type="ECO:0000312" key="23">
    <source>
        <dbReference type="EMBL" id="BAB22862.1"/>
    </source>
</evidence>
<protein>
    <recommendedName>
        <fullName>Ankyrin repeat and SOCS box protein 2</fullName>
        <shortName>ASB-2</shortName>
    </recommendedName>
</protein>
<proteinExistence type="evidence at protein level"/>
<feature type="chain" id="PRO_0000233303" description="Ankyrin repeat and SOCS box protein 2">
    <location>
        <begin position="1"/>
        <end position="634"/>
    </location>
</feature>
<feature type="domain" description="UIM" evidence="4">
    <location>
        <begin position="26"/>
        <end position="45"/>
    </location>
</feature>
<feature type="repeat" description="ANK 1" evidence="2">
    <location>
        <begin position="104"/>
        <end position="133"/>
    </location>
</feature>
<feature type="repeat" description="ANK 2" evidence="2">
    <location>
        <begin position="137"/>
        <end position="167"/>
    </location>
</feature>
<feature type="repeat" description="ANK 3" evidence="2">
    <location>
        <begin position="171"/>
        <end position="200"/>
    </location>
</feature>
<feature type="repeat" description="ANK 4" evidence="2">
    <location>
        <begin position="204"/>
        <end position="233"/>
    </location>
</feature>
<feature type="repeat" description="ANK 5" evidence="2">
    <location>
        <begin position="237"/>
        <end position="266"/>
    </location>
</feature>
<feature type="repeat" description="ANK 6" evidence="2">
    <location>
        <begin position="270"/>
        <end position="299"/>
    </location>
</feature>
<feature type="repeat" description="ANK 7" evidence="2">
    <location>
        <begin position="303"/>
        <end position="332"/>
    </location>
</feature>
<feature type="repeat" description="ANK 8" evidence="2">
    <location>
        <begin position="336"/>
        <end position="365"/>
    </location>
</feature>
<feature type="repeat" description="ANK 9" evidence="2">
    <location>
        <begin position="368"/>
        <end position="397"/>
    </location>
</feature>
<feature type="repeat" description="ANK 10" evidence="2">
    <location>
        <begin position="410"/>
        <end position="439"/>
    </location>
</feature>
<feature type="repeat" description="ANK 11" evidence="2">
    <location>
        <begin position="440"/>
        <end position="469"/>
    </location>
</feature>
<feature type="repeat" description="ANK 12" evidence="2">
    <location>
        <begin position="476"/>
        <end position="504"/>
    </location>
</feature>
<feature type="domain" description="SOCS box" evidence="3">
    <location>
        <begin position="580"/>
        <end position="634"/>
    </location>
</feature>
<feature type="region of interest" description="Disordered" evidence="5">
    <location>
        <begin position="36"/>
        <end position="82"/>
    </location>
</feature>
<feature type="modified residue" description="Phosphoserine" evidence="1">
    <location>
        <position position="371"/>
    </location>
</feature>
<feature type="splice variant" id="VSP_052025" description="In isoform 2." evidence="18">
    <location>
        <begin position="1"/>
        <end position="48"/>
    </location>
</feature>
<feature type="splice variant" id="VSP_052026" description="In isoform 2." evidence="18">
    <original>AEASASSQTNHQPGHFHPWT</original>
    <variation>MTRFSYAEYFALFHSGSAPS</variation>
    <location>
        <begin position="49"/>
        <end position="68"/>
    </location>
</feature>
<feature type="mutagenesis site" description="Loss of E3 ubiquitin-protein ligase complex association and loss of activity of the complex. Does not affect localization of isoform 1 to the Z line or its interaction with DES." evidence="9 11">
    <original>L</original>
    <variation>A</variation>
    <location>
        <position position="595"/>
    </location>
</feature>
<feature type="sequence conflict" description="In Ref. 1; AAD38809." evidence="20" ref="1">
    <original>SS</original>
    <variation>LF</variation>
    <location>
        <begin position="72"/>
        <end position="73"/>
    </location>
</feature>
<organism>
    <name type="scientific">Mus musculus</name>
    <name type="common">Mouse</name>
    <dbReference type="NCBI Taxonomy" id="10090"/>
    <lineage>
        <taxon>Eukaryota</taxon>
        <taxon>Metazoa</taxon>
        <taxon>Chordata</taxon>
        <taxon>Craniata</taxon>
        <taxon>Vertebrata</taxon>
        <taxon>Euteleostomi</taxon>
        <taxon>Mammalia</taxon>
        <taxon>Eutheria</taxon>
        <taxon>Euarchontoglires</taxon>
        <taxon>Glires</taxon>
        <taxon>Rodentia</taxon>
        <taxon>Myomorpha</taxon>
        <taxon>Muroidea</taxon>
        <taxon>Muridae</taxon>
        <taxon>Murinae</taxon>
        <taxon>Mus</taxon>
        <taxon>Mus</taxon>
    </lineage>
</organism>
<gene>
    <name evidence="22" type="primary">Asb2</name>
</gene>
<reference evidence="20 21" key="1">
    <citation type="journal article" date="2000" name="Gene">
        <title>Cloning and characterization of the genes encoding the ankyrin repeat and SOCS box-containing proteins Asb-1, Asb-2, Asb-3 and Asb-4.</title>
        <authorList>
            <person name="Kile B.T."/>
            <person name="Viney E.M."/>
            <person name="Willson T.A."/>
            <person name="Brodnicki T.C."/>
            <person name="Cancilla M.R."/>
            <person name="Herlihy A.S."/>
            <person name="Croker B.A."/>
            <person name="Baca M."/>
            <person name="Nicola N.A."/>
            <person name="Hilton D.J."/>
            <person name="Alexander W.S."/>
        </authorList>
    </citation>
    <scope>NUCLEOTIDE SEQUENCE [MRNA] (ISOFORM 2)</scope>
    <scope>TISSUE SPECIFICITY</scope>
    <source>
        <strain evidence="21">C57BL/6J</strain>
    </source>
</reference>
<reference evidence="20 22" key="2">
    <citation type="journal article" date="2004" name="Genome Res.">
        <title>The status, quality, and expansion of the NIH full-length cDNA project: the Mammalian Gene Collection (MGC).</title>
        <authorList>
            <consortium name="The MGC Project Team"/>
        </authorList>
    </citation>
    <scope>NUCLEOTIDE SEQUENCE [LARGE SCALE MRNA] (ISOFORM 1)</scope>
    <source>
        <strain evidence="22">FVB/N</strain>
        <tissue evidence="22">Colon</tissue>
    </source>
</reference>
<reference evidence="20 23" key="3">
    <citation type="journal article" date="2005" name="Science">
        <title>The transcriptional landscape of the mammalian genome.</title>
        <authorList>
            <person name="Carninci P."/>
            <person name="Kasukawa T."/>
            <person name="Katayama S."/>
            <person name="Gough J."/>
            <person name="Frith M.C."/>
            <person name="Maeda N."/>
            <person name="Oyama R."/>
            <person name="Ravasi T."/>
            <person name="Lenhard B."/>
            <person name="Wells C."/>
            <person name="Kodzius R."/>
            <person name="Shimokawa K."/>
            <person name="Bajic V.B."/>
            <person name="Brenner S.E."/>
            <person name="Batalov S."/>
            <person name="Forrest A.R."/>
            <person name="Zavolan M."/>
            <person name="Davis M.J."/>
            <person name="Wilming L.G."/>
            <person name="Aidinis V."/>
            <person name="Allen J.E."/>
            <person name="Ambesi-Impiombato A."/>
            <person name="Apweiler R."/>
            <person name="Aturaliya R.N."/>
            <person name="Bailey T.L."/>
            <person name="Bansal M."/>
            <person name="Baxter L."/>
            <person name="Beisel K.W."/>
            <person name="Bersano T."/>
            <person name="Bono H."/>
            <person name="Chalk A.M."/>
            <person name="Chiu K.P."/>
            <person name="Choudhary V."/>
            <person name="Christoffels A."/>
            <person name="Clutterbuck D.R."/>
            <person name="Crowe M.L."/>
            <person name="Dalla E."/>
            <person name="Dalrymple B.P."/>
            <person name="de Bono B."/>
            <person name="Della Gatta G."/>
            <person name="di Bernardo D."/>
            <person name="Down T."/>
            <person name="Engstrom P."/>
            <person name="Fagiolini M."/>
            <person name="Faulkner G."/>
            <person name="Fletcher C.F."/>
            <person name="Fukushima T."/>
            <person name="Furuno M."/>
            <person name="Futaki S."/>
            <person name="Gariboldi M."/>
            <person name="Georgii-Hemming P."/>
            <person name="Gingeras T.R."/>
            <person name="Gojobori T."/>
            <person name="Green R.E."/>
            <person name="Gustincich S."/>
            <person name="Harbers M."/>
            <person name="Hayashi Y."/>
            <person name="Hensch T.K."/>
            <person name="Hirokawa N."/>
            <person name="Hill D."/>
            <person name="Huminiecki L."/>
            <person name="Iacono M."/>
            <person name="Ikeo K."/>
            <person name="Iwama A."/>
            <person name="Ishikawa T."/>
            <person name="Jakt M."/>
            <person name="Kanapin A."/>
            <person name="Katoh M."/>
            <person name="Kawasawa Y."/>
            <person name="Kelso J."/>
            <person name="Kitamura H."/>
            <person name="Kitano H."/>
            <person name="Kollias G."/>
            <person name="Krishnan S.P."/>
            <person name="Kruger A."/>
            <person name="Kummerfeld S.K."/>
            <person name="Kurochkin I.V."/>
            <person name="Lareau L.F."/>
            <person name="Lazarevic D."/>
            <person name="Lipovich L."/>
            <person name="Liu J."/>
            <person name="Liuni S."/>
            <person name="McWilliam S."/>
            <person name="Madan Babu M."/>
            <person name="Madera M."/>
            <person name="Marchionni L."/>
            <person name="Matsuda H."/>
            <person name="Matsuzawa S."/>
            <person name="Miki H."/>
            <person name="Mignone F."/>
            <person name="Miyake S."/>
            <person name="Morris K."/>
            <person name="Mottagui-Tabar S."/>
            <person name="Mulder N."/>
            <person name="Nakano N."/>
            <person name="Nakauchi H."/>
            <person name="Ng P."/>
            <person name="Nilsson R."/>
            <person name="Nishiguchi S."/>
            <person name="Nishikawa S."/>
            <person name="Nori F."/>
            <person name="Ohara O."/>
            <person name="Okazaki Y."/>
            <person name="Orlando V."/>
            <person name="Pang K.C."/>
            <person name="Pavan W.J."/>
            <person name="Pavesi G."/>
            <person name="Pesole G."/>
            <person name="Petrovsky N."/>
            <person name="Piazza S."/>
            <person name="Reed J."/>
            <person name="Reid J.F."/>
            <person name="Ring B.Z."/>
            <person name="Ringwald M."/>
            <person name="Rost B."/>
            <person name="Ruan Y."/>
            <person name="Salzberg S.L."/>
            <person name="Sandelin A."/>
            <person name="Schneider C."/>
            <person name="Schoenbach C."/>
            <person name="Sekiguchi K."/>
            <person name="Semple C.A."/>
            <person name="Seno S."/>
            <person name="Sessa L."/>
            <person name="Sheng Y."/>
            <person name="Shibata Y."/>
            <person name="Shimada H."/>
            <person name="Shimada K."/>
            <person name="Silva D."/>
            <person name="Sinclair B."/>
            <person name="Sperling S."/>
            <person name="Stupka E."/>
            <person name="Sugiura K."/>
            <person name="Sultana R."/>
            <person name="Takenaka Y."/>
            <person name="Taki K."/>
            <person name="Tammoja K."/>
            <person name="Tan S.L."/>
            <person name="Tang S."/>
            <person name="Taylor M.S."/>
            <person name="Tegner J."/>
            <person name="Teichmann S.A."/>
            <person name="Ueda H.R."/>
            <person name="van Nimwegen E."/>
            <person name="Verardo R."/>
            <person name="Wei C.L."/>
            <person name="Yagi K."/>
            <person name="Yamanishi H."/>
            <person name="Zabarovsky E."/>
            <person name="Zhu S."/>
            <person name="Zimmer A."/>
            <person name="Hide W."/>
            <person name="Bult C."/>
            <person name="Grimmond S.M."/>
            <person name="Teasdale R.D."/>
            <person name="Liu E.T."/>
            <person name="Brusic V."/>
            <person name="Quackenbush J."/>
            <person name="Wahlestedt C."/>
            <person name="Mattick J.S."/>
            <person name="Hume D.A."/>
            <person name="Kai C."/>
            <person name="Sasaki D."/>
            <person name="Tomaru Y."/>
            <person name="Fukuda S."/>
            <person name="Kanamori-Katayama M."/>
            <person name="Suzuki M."/>
            <person name="Aoki J."/>
            <person name="Arakawa T."/>
            <person name="Iida J."/>
            <person name="Imamura K."/>
            <person name="Itoh M."/>
            <person name="Kato T."/>
            <person name="Kawaji H."/>
            <person name="Kawagashira N."/>
            <person name="Kawashima T."/>
            <person name="Kojima M."/>
            <person name="Kondo S."/>
            <person name="Konno H."/>
            <person name="Nakano K."/>
            <person name="Ninomiya N."/>
            <person name="Nishio T."/>
            <person name="Okada M."/>
            <person name="Plessy C."/>
            <person name="Shibata K."/>
            <person name="Shiraki T."/>
            <person name="Suzuki S."/>
            <person name="Tagami M."/>
            <person name="Waki K."/>
            <person name="Watahiki A."/>
            <person name="Okamura-Oho Y."/>
            <person name="Suzuki H."/>
            <person name="Kawai J."/>
            <person name="Hayashizaki Y."/>
        </authorList>
    </citation>
    <scope>NUCLEOTIDE SEQUENCE [LARGE SCALE MRNA] OF 472-634</scope>
    <source>
        <strain evidence="23">C57BL/6J</strain>
        <tissue evidence="8">Embryo</tissue>
    </source>
</reference>
<reference key="4">
    <citation type="journal article" date="2009" name="Cell Death Differ.">
        <title>The E3 ubiquitin ligase specificity subunit ASB2beta is a novel regulator of muscle differentiation that targets filamin B to proteasomal degradation.</title>
        <authorList>
            <person name="Bello N.F."/>
            <person name="Lamsoul I."/>
            <person name="Heuze M.L."/>
            <person name="Metais A."/>
            <person name="Moreaux G."/>
            <person name="Calderwood D.A."/>
            <person name="Duprez D."/>
            <person name="Moog-Lutz C."/>
            <person name="Lutz P.G."/>
        </authorList>
    </citation>
    <scope>MUTAGENESIS OF LEU-595 (ISOFORM 1)</scope>
</reference>
<reference key="5">
    <citation type="journal article" date="2010" name="Cell">
        <title>A tissue-specific atlas of mouse protein phosphorylation and expression.</title>
        <authorList>
            <person name="Huttlin E.L."/>
            <person name="Jedrychowski M.P."/>
            <person name="Elias J.E."/>
            <person name="Goswami T."/>
            <person name="Rad R."/>
            <person name="Beausoleil S.A."/>
            <person name="Villen J."/>
            <person name="Haas W."/>
            <person name="Sowa M.E."/>
            <person name="Gygi S.P."/>
        </authorList>
    </citation>
    <scope>IDENTIFICATION BY MASS SPECTROMETRY [LARGE SCALE ANALYSIS]</scope>
    <source>
        <tissue>Heart</tissue>
    </source>
</reference>
<reference key="6">
    <citation type="journal article" date="2013" name="Blood">
        <title>ASB2alpha regulates migration of immature dendritic cells.</title>
        <authorList>
            <person name="Lamsoul I."/>
            <person name="Metais A."/>
            <person name="Gouot E."/>
            <person name="Heuze M.L."/>
            <person name="Lennon-Dumenil A.M."/>
            <person name="Moog-Lutz C."/>
            <person name="Lutz P.G."/>
        </authorList>
    </citation>
    <scope>FUNCTION (ISOFORM 2)</scope>
    <scope>TISSUE SPECIFICITY (ISOFORMS 1 AND 2)</scope>
    <scope>DEVELOPMENTAL STAGE (ISOFORM 2)</scope>
    <scope>DISRUPTION PHENOTYPE (ISOFORM 2)</scope>
</reference>
<reference key="7">
    <citation type="journal article" date="2015" name="J. Mol. Cell. Cardiol.">
        <title>The E3 ubiquitin ligase Asb2beta is downregulated in a mouse model of hypertrophic cardiomyopathy and targets desmin for proteasomal degradation.</title>
        <authorList>
            <person name="Thottakara T."/>
            <person name="Friedrich F.W."/>
            <person name="Reischmann S."/>
            <person name="Braumann S."/>
            <person name="Schlossarek S."/>
            <person name="Kraemer E."/>
            <person name="Juhr D."/>
            <person name="Schlueter H."/>
            <person name="van der Velden J."/>
            <person name="Muench J."/>
            <person name="Patten M."/>
            <person name="Eschenhagen T."/>
            <person name="Moog-Lutz C."/>
            <person name="Carrier L."/>
        </authorList>
    </citation>
    <scope>FUNCTION (ISOFORM 1)</scope>
    <scope>INTERACTION WITH DES (ISOFORM 1)</scope>
    <scope>SUBCELLULAR LOCATION (ISOFORM 1)</scope>
    <scope>MUTAGENESIS OF LEU-595 (ISOFORM 1)</scope>
</reference>
<reference key="8">
    <citation type="journal article" date="2016" name="JCI Insight">
        <title>Integrated expression analysis of muscle hypertrophy identifies Asb2 as a negative regulator of muscle mass.</title>
        <authorList>
            <person name="Davey J.R."/>
            <person name="Watt K.I."/>
            <person name="Parker B.L."/>
            <person name="Chaudhuri R."/>
            <person name="Ryall J.G."/>
            <person name="Cunningham L."/>
            <person name="Qian H."/>
            <person name="Sartorelli V."/>
            <person name="Sandri M."/>
            <person name="Chamberlain J."/>
            <person name="James D.E."/>
            <person name="Gregorevic P."/>
        </authorList>
    </citation>
    <scope>FUNCTION (ISOFORM 1)</scope>
    <scope>INDUCTION</scope>
</reference>
<reference key="9">
    <citation type="journal article" date="2018" name="Circ. Res.">
        <title>Asb2alpha-Filamin A Axis Is Essential for Actin Cytoskeleton Remodeling During Heart Development.</title>
        <authorList>
            <person name="Metais A."/>
            <person name="Lamsoul I."/>
            <person name="Melet A."/>
            <person name="Uttenweiler-Joseph S."/>
            <person name="Poincloux R."/>
            <person name="Stefanovic S."/>
            <person name="Valiere A."/>
            <person name="Gonzalez de Peredo A."/>
            <person name="Stella A."/>
            <person name="Burlet-Schiltz O."/>
            <person name="Zaffran S."/>
            <person name="Lutz P.G."/>
            <person name="Moog-Lutz C."/>
        </authorList>
    </citation>
    <scope>FUNCTION (ISOFORM 2)</scope>
    <scope>TISSUE SPECIFICITY (ISOFORMS 1 AND 2)</scope>
    <scope>DEVELOPMENTAL STAGE (ISOFORMS 1 AND 2)</scope>
    <scope>DISRUPTION PHENOTYPE</scope>
</reference>
<reference key="10">
    <citation type="journal article" date="2019" name="Cancer Immunol. Res.">
        <title>The E3 Ubiquitin Ligase Asb2alpha in T Helper 2 Cells Negatively Regulates Antitumor Immunity in Colorectal Cancer.</title>
        <authorList>
            <person name="Spinner C.A."/>
            <person name="Lamsoul I."/>
            <person name="Metais A."/>
            <person name="Febrissy C."/>
            <person name="Moog-Lutz C."/>
            <person name="Lutz P.G."/>
        </authorList>
    </citation>
    <scope>TISSUE SPECIFICITY (ISOFORM 2)</scope>
    <scope>DISRUPTION PHENOTYPE (ISOFORM 2)</scope>
</reference>
<reference key="11">
    <citation type="journal article" date="2020" name="IScience">
        <title>Loss of Asb2 Impairs Cardiomyocyte Differentiation and Leads to Congenital Double Outlet Right Ventricle.</title>
        <authorList>
            <person name="Yamak A."/>
            <person name="Hu D."/>
            <person name="Mittal N."/>
            <person name="Buikema J.W."/>
            <person name="Ditta S."/>
            <person name="Lutz P.G."/>
            <person name="Moog-Lutz C."/>
            <person name="Ellinor P.T."/>
            <person name="Domian I.J."/>
        </authorList>
    </citation>
    <scope>FUNCTION</scope>
    <scope>TISSUE SPECIFICITY</scope>
    <scope>DEVELOPMENTAL STAGE (ISOFORM 1)</scope>
    <scope>DISRUPTION PHENOTYPE</scope>
</reference>
<reference key="12">
    <citation type="journal article" date="2021" name="Cells Dev.">
        <title>Heart defects and embryonic lethality in Asb2 knock out mice correlate with placental defects.</title>
        <authorList>
            <person name="Park S.G."/>
            <person name="Kim E.K."/>
            <person name="Nam K.H."/>
            <person name="Lee J.G."/>
            <person name="Baek I.J."/>
            <person name="Lee B.J."/>
            <person name="Nam S.Y."/>
        </authorList>
    </citation>
    <scope>DISRUPTION PHENOTYPE</scope>
</reference>
<reference key="13">
    <citation type="journal article" date="2021" name="Front. Immunol.">
        <title>AHR Regulates NK Cell Migration via ASB2-Mediated Ubiquitination of Filamin A.</title>
        <authorList>
            <person name="Shin J.H."/>
            <person name="Moreno-Nieves U.Y."/>
            <person name="Zhang L.H."/>
            <person name="Chen C."/>
            <person name="Dixon A.L."/>
            <person name="Linde M.H."/>
            <person name="Mace E.M."/>
            <person name="Sunwoo J.B."/>
        </authorList>
    </citation>
    <scope>FUNCTION</scope>
    <scope>INDUCTION BY AHR</scope>
</reference>